<reference key="1">
    <citation type="journal article" date="1997" name="Biochim. Biophys. Acta">
        <title>Cysteine biosynthesis in higher plants: a new member of the Arabidopsis thaliana serine acetyltransferase small gene-family obtained by functional complementation of an Escherichia coli cysteine auxotroph.</title>
        <authorList>
            <person name="Howarth J.R."/>
            <person name="Roberts M.A."/>
            <person name="Wray J.L."/>
        </authorList>
    </citation>
    <scope>NUCLEOTIDE SEQUENCE [MRNA]</scope>
    <source>
        <strain>cv. Columbia</strain>
    </source>
</reference>
<reference key="2">
    <citation type="journal article" date="1998" name="DNA Res.">
        <title>Structural analysis of Arabidopsis thaliana chromosome 5. VI. Sequence features of the regions of 1,367,185 bp covered by 19 physically assigned P1 and TAC clones.</title>
        <authorList>
            <person name="Kotani H."/>
            <person name="Nakamura Y."/>
            <person name="Sato S."/>
            <person name="Asamizu E."/>
            <person name="Kaneko T."/>
            <person name="Miyajima N."/>
            <person name="Tabata S."/>
        </authorList>
    </citation>
    <scope>NUCLEOTIDE SEQUENCE [LARGE SCALE GENOMIC DNA]</scope>
    <source>
        <strain>cv. Columbia</strain>
    </source>
</reference>
<reference key="3">
    <citation type="journal article" date="2017" name="Plant J.">
        <title>Araport11: a complete reannotation of the Arabidopsis thaliana reference genome.</title>
        <authorList>
            <person name="Cheng C.Y."/>
            <person name="Krishnakumar V."/>
            <person name="Chan A.P."/>
            <person name="Thibaud-Nissen F."/>
            <person name="Schobel S."/>
            <person name="Town C.D."/>
        </authorList>
    </citation>
    <scope>GENOME REANNOTATION</scope>
    <source>
        <strain>cv. Columbia</strain>
    </source>
</reference>
<reference key="4">
    <citation type="journal article" date="2003" name="Science">
        <title>Empirical analysis of transcriptional activity in the Arabidopsis genome.</title>
        <authorList>
            <person name="Yamada K."/>
            <person name="Lim J."/>
            <person name="Dale J.M."/>
            <person name="Chen H."/>
            <person name="Shinn P."/>
            <person name="Palm C.J."/>
            <person name="Southwick A.M."/>
            <person name="Wu H.C."/>
            <person name="Kim C.J."/>
            <person name="Nguyen M."/>
            <person name="Pham P.K."/>
            <person name="Cheuk R.F."/>
            <person name="Karlin-Newmann G."/>
            <person name="Liu S.X."/>
            <person name="Lam B."/>
            <person name="Sakano H."/>
            <person name="Wu T."/>
            <person name="Yu G."/>
            <person name="Miranda M."/>
            <person name="Quach H.L."/>
            <person name="Tripp M."/>
            <person name="Chang C.H."/>
            <person name="Lee J.M."/>
            <person name="Toriumi M.J."/>
            <person name="Chan M.M."/>
            <person name="Tang C.C."/>
            <person name="Onodera C.S."/>
            <person name="Deng J.M."/>
            <person name="Akiyama K."/>
            <person name="Ansari Y."/>
            <person name="Arakawa T."/>
            <person name="Banh J."/>
            <person name="Banno F."/>
            <person name="Bowser L."/>
            <person name="Brooks S.Y."/>
            <person name="Carninci P."/>
            <person name="Chao Q."/>
            <person name="Choy N."/>
            <person name="Enju A."/>
            <person name="Goldsmith A.D."/>
            <person name="Gurjal M."/>
            <person name="Hansen N.F."/>
            <person name="Hayashizaki Y."/>
            <person name="Johnson-Hopson C."/>
            <person name="Hsuan V.W."/>
            <person name="Iida K."/>
            <person name="Karnes M."/>
            <person name="Khan S."/>
            <person name="Koesema E."/>
            <person name="Ishida J."/>
            <person name="Jiang P.X."/>
            <person name="Jones T."/>
            <person name="Kawai J."/>
            <person name="Kamiya A."/>
            <person name="Meyers C."/>
            <person name="Nakajima M."/>
            <person name="Narusaka M."/>
            <person name="Seki M."/>
            <person name="Sakurai T."/>
            <person name="Satou M."/>
            <person name="Tamse R."/>
            <person name="Vaysberg M."/>
            <person name="Wallender E.K."/>
            <person name="Wong C."/>
            <person name="Yamamura Y."/>
            <person name="Yuan S."/>
            <person name="Shinozaki K."/>
            <person name="Davis R.W."/>
            <person name="Theologis A."/>
            <person name="Ecker J.R."/>
        </authorList>
    </citation>
    <scope>NUCLEOTIDE SEQUENCE [LARGE SCALE MRNA]</scope>
    <source>
        <strain>cv. Columbia</strain>
    </source>
</reference>
<reference key="5">
    <citation type="submission" date="2006-07" db="EMBL/GenBank/DDBJ databases">
        <title>Large-scale analysis of RIKEN Arabidopsis full-length (RAFL) cDNAs.</title>
        <authorList>
            <person name="Totoki Y."/>
            <person name="Seki M."/>
            <person name="Ishida J."/>
            <person name="Nakajima M."/>
            <person name="Enju A."/>
            <person name="Kamiya A."/>
            <person name="Narusaka M."/>
            <person name="Shin-i T."/>
            <person name="Nakagawa M."/>
            <person name="Sakamoto N."/>
            <person name="Oishi K."/>
            <person name="Kohara Y."/>
            <person name="Kobayashi M."/>
            <person name="Toyoda A."/>
            <person name="Sakaki Y."/>
            <person name="Sakurai T."/>
            <person name="Iida K."/>
            <person name="Akiyama K."/>
            <person name="Satou M."/>
            <person name="Toyoda T."/>
            <person name="Konagaya A."/>
            <person name="Carninci P."/>
            <person name="Kawai J."/>
            <person name="Hayashizaki Y."/>
            <person name="Shinozaki K."/>
        </authorList>
    </citation>
    <scope>NUCLEOTIDE SEQUENCE [LARGE SCALE MRNA]</scope>
    <source>
        <strain>cv. Columbia</strain>
    </source>
</reference>
<reference key="6">
    <citation type="submission" date="2002-03" db="EMBL/GenBank/DDBJ databases">
        <title>Full-length cDNA from Arabidopsis thaliana.</title>
        <authorList>
            <person name="Brover V.V."/>
            <person name="Troukhan M.E."/>
            <person name="Alexandrov N.A."/>
            <person name="Lu Y.-P."/>
            <person name="Flavell R.B."/>
            <person name="Feldmann K.A."/>
        </authorList>
    </citation>
    <scope>NUCLEOTIDE SEQUENCE [LARGE SCALE MRNA]</scope>
</reference>
<reference key="7">
    <citation type="journal article" date="1998" name="J. Biol. Chem.">
        <title>Isoform-dependent differences in feedback regulation and subcellular localization of serine acetyltransferase involved in cysteine biosynthesis from Arabidopsis thaliana.</title>
        <authorList>
            <person name="Noji M."/>
            <person name="Inoue K."/>
            <person name="Kimura N."/>
            <person name="Gouda A."/>
            <person name="Saito K."/>
        </authorList>
    </citation>
    <scope>ACTIVITY REGULATION</scope>
    <scope>SUBCELLULAR LOCATION</scope>
    <scope>BIOPHYSICOCHEMICAL PROPERTIES</scope>
</reference>
<reference key="8">
    <citation type="journal article" date="2003" name="Plant Mol. Biol.">
        <title>The serine acetyltransferase gene family in Arabidopsis thaliana and the regulation of its expression by cadmium.</title>
        <authorList>
            <person name="Howarth J.R."/>
            <person name="Dominguez-Solis J.R."/>
            <person name="Gutierrez-Alcala G."/>
            <person name="Wray J.L."/>
            <person name="Romero L.C."/>
            <person name="Gotor C."/>
        </authorList>
    </citation>
    <scope>TISSUE SPECIFICITY</scope>
    <scope>INDUCTION</scope>
    <source>
        <strain>cv. Columbia</strain>
    </source>
</reference>
<reference key="9">
    <citation type="journal article" date="2005" name="Plant Physiol.">
        <title>Characterization and expression analysis of a serine acetyltransferase gene family involved in a key step of the sulfur assimilation pathway in Arabidopsis.</title>
        <authorList>
            <person name="Kawashima C.G."/>
            <person name="Berkowitz O."/>
            <person name="Hell R."/>
            <person name="Noji M."/>
            <person name="Saito K."/>
        </authorList>
    </citation>
    <scope>TISSUE SPECIFICITY</scope>
    <scope>INDUCTION</scope>
    <scope>GENE FAMILY</scope>
    <scope>NOMENCLATURE</scope>
</reference>
<comment type="catalytic activity">
    <reaction>
        <text>L-serine + acetyl-CoA = O-acetyl-L-serine + CoA</text>
        <dbReference type="Rhea" id="RHEA:24560"/>
        <dbReference type="ChEBI" id="CHEBI:33384"/>
        <dbReference type="ChEBI" id="CHEBI:57287"/>
        <dbReference type="ChEBI" id="CHEBI:57288"/>
        <dbReference type="ChEBI" id="CHEBI:58340"/>
        <dbReference type="EC" id="2.3.1.30"/>
    </reaction>
</comment>
<comment type="activity regulation">
    <text evidence="5">Feedback inhibitions by L-Ser and acetyl-CoA.</text>
</comment>
<comment type="biophysicochemical properties">
    <kinetics>
        <KM evidence="5">2.71 mM for L-Ser (at pH 8 and 37 degrees Celsius)</KM>
        <KM evidence="5">0.28 mM for acetyl-CoA (at pH 8 and 37 degrees Celsius)</KM>
    </kinetics>
</comment>
<comment type="pathway">
    <text>Amino-acid biosynthesis; L-cysteine biosynthesis; L-cysteine from L-serine: step 1/2.</text>
</comment>
<comment type="subunit">
    <text evidence="1">Homomultimer.</text>
</comment>
<comment type="subcellular location">
    <subcellularLocation>
        <location evidence="5">Cytoplasm</location>
    </subcellularLocation>
</comment>
<comment type="tissue specificity">
    <text evidence="3 4">Mostly expressed in stems, flowers and siliques. Localized in vascular tissues, particularly in phloem.</text>
</comment>
<comment type="induction">
    <text evidence="3 4">By cadmium (Cd). Not induced under sulfur-deficient conditions.</text>
</comment>
<comment type="similarity">
    <text evidence="6">Belongs to the transferase hexapeptide repeat family.</text>
</comment>
<sequence>MPPAGELRHQSPSKEKLSSVTQSDEAEAASAAISAAAADAEAAGLWTQIKAEARRDAEAEPALASYLYSTILSHSSLERSISFHLGNKLCSSTLLSTLLYDLFLNTFSSDPSLRNATVADLRAARVRDPACISFSHCLLNYKGFLAIQAHRVSHKLWTQSRKPLALALHSRISDVFAVDIHPAAKIGKGILLDHATGVVVGETAVIGNNVSILHHVTLGGTGKACGDRHPKIGDGCLIGAGATILGNVKIGAGAKVGAGSVVLIDVPCRGTAVGNPARLVGGKEKPTIHDEECPGESMDHTSFISEWSDYII</sequence>
<keyword id="KW-0012">Acyltransferase</keyword>
<keyword id="KW-0028">Amino-acid biosynthesis</keyword>
<keyword id="KW-0963">Cytoplasm</keyword>
<keyword id="KW-1185">Reference proteome</keyword>
<keyword id="KW-0808">Transferase</keyword>
<dbReference type="EC" id="2.3.1.30"/>
<dbReference type="EMBL" id="U30298">
    <property type="protein sequence ID" value="AAC49655.1"/>
    <property type="molecule type" value="mRNA"/>
</dbReference>
<dbReference type="EMBL" id="AB013392">
    <property type="protein sequence ID" value="BAB09894.1"/>
    <property type="molecule type" value="Genomic_DNA"/>
</dbReference>
<dbReference type="EMBL" id="CP002688">
    <property type="protein sequence ID" value="AED96804.1"/>
    <property type="molecule type" value="Genomic_DNA"/>
</dbReference>
<dbReference type="EMBL" id="AY039612">
    <property type="protein sequence ID" value="AAK62667.1"/>
    <property type="molecule type" value="mRNA"/>
</dbReference>
<dbReference type="EMBL" id="AY133674">
    <property type="protein sequence ID" value="AAM91504.1"/>
    <property type="molecule type" value="mRNA"/>
</dbReference>
<dbReference type="EMBL" id="AK227979">
    <property type="protein sequence ID" value="BAE99945.1"/>
    <property type="molecule type" value="mRNA"/>
</dbReference>
<dbReference type="EMBL" id="AY084861">
    <property type="protein sequence ID" value="AAM61424.1"/>
    <property type="molecule type" value="mRNA"/>
</dbReference>
<dbReference type="PIR" id="S71207">
    <property type="entry name" value="S71207"/>
</dbReference>
<dbReference type="RefSeq" id="NP_200487.1">
    <property type="nucleotide sequence ID" value="NM_125059.3"/>
</dbReference>
<dbReference type="SMR" id="Q42538"/>
<dbReference type="BioGRID" id="21022">
    <property type="interactions" value="9"/>
</dbReference>
<dbReference type="FunCoup" id="Q42538">
    <property type="interactions" value="583"/>
</dbReference>
<dbReference type="IntAct" id="Q42538">
    <property type="interactions" value="1"/>
</dbReference>
<dbReference type="STRING" id="3702.Q42538"/>
<dbReference type="iPTMnet" id="Q42538"/>
<dbReference type="PaxDb" id="3702-AT5G56760.1"/>
<dbReference type="ProteomicsDB" id="226618"/>
<dbReference type="EnsemblPlants" id="AT5G56760.1">
    <property type="protein sequence ID" value="AT5G56760.1"/>
    <property type="gene ID" value="AT5G56760"/>
</dbReference>
<dbReference type="GeneID" id="835778"/>
<dbReference type="Gramene" id="AT5G56760.1">
    <property type="protein sequence ID" value="AT5G56760.1"/>
    <property type="gene ID" value="AT5G56760"/>
</dbReference>
<dbReference type="KEGG" id="ath:AT5G56760"/>
<dbReference type="Araport" id="AT5G56760"/>
<dbReference type="TAIR" id="AT5G56760">
    <property type="gene designation" value="SERAT1"/>
</dbReference>
<dbReference type="eggNOG" id="KOG4750">
    <property type="taxonomic scope" value="Eukaryota"/>
</dbReference>
<dbReference type="HOGENOM" id="CLU_051638_0_1_1"/>
<dbReference type="InParanoid" id="Q42538"/>
<dbReference type="OMA" id="MPAIALR"/>
<dbReference type="PhylomeDB" id="Q42538"/>
<dbReference type="BioCyc" id="ARA:AT5G56760-MONOMER"/>
<dbReference type="BioCyc" id="MetaCyc:AT5G56760-MONOMER"/>
<dbReference type="BRENDA" id="2.3.1.30">
    <property type="organism ID" value="399"/>
</dbReference>
<dbReference type="SABIO-RK" id="Q42538"/>
<dbReference type="UniPathway" id="UPA00136">
    <property type="reaction ID" value="UER00199"/>
</dbReference>
<dbReference type="PRO" id="PR:Q42538"/>
<dbReference type="Proteomes" id="UP000006548">
    <property type="component" value="Chromosome 5"/>
</dbReference>
<dbReference type="ExpressionAtlas" id="Q42538">
    <property type="expression patterns" value="baseline and differential"/>
</dbReference>
<dbReference type="GO" id="GO:0005829">
    <property type="term" value="C:cytosol"/>
    <property type="evidence" value="ECO:0000314"/>
    <property type="project" value="TAIR"/>
</dbReference>
<dbReference type="GO" id="GO:0009001">
    <property type="term" value="F:serine O-acetyltransferase activity"/>
    <property type="evidence" value="ECO:0007669"/>
    <property type="project" value="UniProtKB-EC"/>
</dbReference>
<dbReference type="GO" id="GO:0006535">
    <property type="term" value="P:cysteine biosynthetic process from serine"/>
    <property type="evidence" value="ECO:0007669"/>
    <property type="project" value="InterPro"/>
</dbReference>
<dbReference type="CDD" id="cd03354">
    <property type="entry name" value="LbH_SAT"/>
    <property type="match status" value="1"/>
</dbReference>
<dbReference type="FunFam" id="2.160.10.10:FF:000002">
    <property type="entry name" value="Serine acetyltransferase"/>
    <property type="match status" value="1"/>
</dbReference>
<dbReference type="Gene3D" id="2.160.10.10">
    <property type="entry name" value="Hexapeptide repeat proteins"/>
    <property type="match status" value="1"/>
</dbReference>
<dbReference type="Gene3D" id="1.10.3130.10">
    <property type="entry name" value="serine acetyltransferase, domain 1"/>
    <property type="match status" value="1"/>
</dbReference>
<dbReference type="InterPro" id="IPR001451">
    <property type="entry name" value="Hexapep"/>
</dbReference>
<dbReference type="InterPro" id="IPR018357">
    <property type="entry name" value="Hexapep_transf_CS"/>
</dbReference>
<dbReference type="InterPro" id="IPR045304">
    <property type="entry name" value="LbH_SAT"/>
</dbReference>
<dbReference type="InterPro" id="IPR010493">
    <property type="entry name" value="Ser_AcTrfase_N"/>
</dbReference>
<dbReference type="InterPro" id="IPR042122">
    <property type="entry name" value="Ser_AcTrfase_N_sf"/>
</dbReference>
<dbReference type="InterPro" id="IPR005881">
    <property type="entry name" value="Ser_O-AcTrfase"/>
</dbReference>
<dbReference type="InterPro" id="IPR053376">
    <property type="entry name" value="Serine_acetyltransferase"/>
</dbReference>
<dbReference type="InterPro" id="IPR011004">
    <property type="entry name" value="Trimer_LpxA-like_sf"/>
</dbReference>
<dbReference type="NCBIfam" id="TIGR01172">
    <property type="entry name" value="cysE"/>
    <property type="match status" value="1"/>
</dbReference>
<dbReference type="NCBIfam" id="NF041874">
    <property type="entry name" value="EPS_EpsC"/>
    <property type="match status" value="1"/>
</dbReference>
<dbReference type="PANTHER" id="PTHR42811">
    <property type="entry name" value="SERINE ACETYLTRANSFERASE"/>
    <property type="match status" value="1"/>
</dbReference>
<dbReference type="Pfam" id="PF00132">
    <property type="entry name" value="Hexapep"/>
    <property type="match status" value="1"/>
</dbReference>
<dbReference type="Pfam" id="PF06426">
    <property type="entry name" value="SATase_N"/>
    <property type="match status" value="1"/>
</dbReference>
<dbReference type="SMART" id="SM00971">
    <property type="entry name" value="SATase_N"/>
    <property type="match status" value="1"/>
</dbReference>
<dbReference type="SUPFAM" id="SSF51161">
    <property type="entry name" value="Trimeric LpxA-like enzymes"/>
    <property type="match status" value="1"/>
</dbReference>
<dbReference type="PROSITE" id="PS00101">
    <property type="entry name" value="HEXAPEP_TRANSFERASES"/>
    <property type="match status" value="1"/>
</dbReference>
<proteinExistence type="evidence at protein level"/>
<evidence type="ECO:0000250" key="1"/>
<evidence type="ECO:0000256" key="2">
    <source>
        <dbReference type="SAM" id="MobiDB-lite"/>
    </source>
</evidence>
<evidence type="ECO:0000269" key="3">
    <source>
    </source>
</evidence>
<evidence type="ECO:0000269" key="4">
    <source>
    </source>
</evidence>
<evidence type="ECO:0000269" key="5">
    <source>
    </source>
</evidence>
<evidence type="ECO:0000305" key="6"/>
<name>SAT5_ARATH</name>
<accession>Q42538</accession>
<accession>Q0WSF3</accession>
<accession>Q8LFG6</accession>
<feature type="chain" id="PRO_0000068693" description="Serine acetyltransferase 5">
    <location>
        <begin position="1"/>
        <end position="312"/>
    </location>
</feature>
<feature type="region of interest" description="Disordered" evidence="2">
    <location>
        <begin position="1"/>
        <end position="25"/>
    </location>
</feature>
<feature type="compositionally biased region" description="Basic and acidic residues" evidence="2">
    <location>
        <begin position="1"/>
        <end position="17"/>
    </location>
</feature>
<feature type="sequence conflict" description="In Ref. 5; AAM61424." evidence="6" ref="5">
    <original>S</original>
    <variation>F</variation>
    <location>
        <position position="23"/>
    </location>
</feature>
<feature type="sequence conflict" description="In Ref. 5; AAM61424." evidence="6" ref="5">
    <original>S</original>
    <variation>A</variation>
    <location>
        <position position="30"/>
    </location>
</feature>
<protein>
    <recommendedName>
        <fullName>Serine acetyltransferase 5</fullName>
        <shortName>AtSAT-5</shortName>
        <ecNumber>2.3.1.30</ecNumber>
    </recommendedName>
    <alternativeName>
        <fullName>AtSERAT1;1</fullName>
    </alternativeName>
    <alternativeName>
        <fullName>SAT-c</fullName>
    </alternativeName>
</protein>
<gene>
    <name type="primary">SAT5</name>
    <name type="synonym">SAT52</name>
    <name type="ordered locus">At5g56760</name>
    <name type="ORF">MIK19.23</name>
</gene>
<organism>
    <name type="scientific">Arabidopsis thaliana</name>
    <name type="common">Mouse-ear cress</name>
    <dbReference type="NCBI Taxonomy" id="3702"/>
    <lineage>
        <taxon>Eukaryota</taxon>
        <taxon>Viridiplantae</taxon>
        <taxon>Streptophyta</taxon>
        <taxon>Embryophyta</taxon>
        <taxon>Tracheophyta</taxon>
        <taxon>Spermatophyta</taxon>
        <taxon>Magnoliopsida</taxon>
        <taxon>eudicotyledons</taxon>
        <taxon>Gunneridae</taxon>
        <taxon>Pentapetalae</taxon>
        <taxon>rosids</taxon>
        <taxon>malvids</taxon>
        <taxon>Brassicales</taxon>
        <taxon>Brassicaceae</taxon>
        <taxon>Camelineae</taxon>
        <taxon>Arabidopsis</taxon>
    </lineage>
</organism>